<keyword id="KW-0929">Antimicrobial</keyword>
<keyword id="KW-0903">Direct protein sequencing</keyword>
<keyword id="KW-0295">Fungicide</keyword>
<keyword id="KW-0611">Plant defense</keyword>
<organism>
    <name type="scientific">Hordeum vulgare</name>
    <name type="common">Barley</name>
    <dbReference type="NCBI Taxonomy" id="4513"/>
    <lineage>
        <taxon>Eukaryota</taxon>
        <taxon>Viridiplantae</taxon>
        <taxon>Streptophyta</taxon>
        <taxon>Embryophyta</taxon>
        <taxon>Tracheophyta</taxon>
        <taxon>Spermatophyta</taxon>
        <taxon>Magnoliopsida</taxon>
        <taxon>Liliopsida</taxon>
        <taxon>Poales</taxon>
        <taxon>Poaceae</taxon>
        <taxon>BOP clade</taxon>
        <taxon>Pooideae</taxon>
        <taxon>Triticodae</taxon>
        <taxon>Triticeae</taxon>
        <taxon>Hordeinae</taxon>
        <taxon>Hordeum</taxon>
    </lineage>
</organism>
<evidence type="ECO:0000255" key="1">
    <source>
        <dbReference type="PROSITE-ProRule" id="PRU00699"/>
    </source>
</evidence>
<comment type="function">
    <text>Has antifungal activity. Inhibits the growth of Trichoderma viridae and Candida albicans.</text>
</comment>
<comment type="similarity">
    <text evidence="1">Belongs to the thaumatin family.</text>
</comment>
<dbReference type="PIR" id="S17573">
    <property type="entry name" value="S17573"/>
</dbReference>
<dbReference type="SMR" id="P33044"/>
<dbReference type="ExpressionAtlas" id="P33044">
    <property type="expression patterns" value="baseline and differential"/>
</dbReference>
<dbReference type="GO" id="GO:0050832">
    <property type="term" value="P:defense response to fungus"/>
    <property type="evidence" value="ECO:0007669"/>
    <property type="project" value="UniProtKB-KW"/>
</dbReference>
<dbReference type="GO" id="GO:0031640">
    <property type="term" value="P:killing of cells of another organism"/>
    <property type="evidence" value="ECO:0007669"/>
    <property type="project" value="UniProtKB-KW"/>
</dbReference>
<dbReference type="Gene3D" id="2.60.110.10">
    <property type="entry name" value="Thaumatin"/>
    <property type="match status" value="1"/>
</dbReference>
<dbReference type="InterPro" id="IPR037176">
    <property type="entry name" value="Osmotin/thaumatin-like_sf"/>
</dbReference>
<dbReference type="InterPro" id="IPR001938">
    <property type="entry name" value="Thaumatin"/>
</dbReference>
<dbReference type="SUPFAM" id="SSF49870">
    <property type="entry name" value="Osmotin, thaumatin-like protein"/>
    <property type="match status" value="1"/>
</dbReference>
<dbReference type="PROSITE" id="PS51367">
    <property type="entry name" value="THAUMATIN_2"/>
    <property type="match status" value="1"/>
</dbReference>
<protein>
    <recommendedName>
        <fullName>Antifungal protein R</fullName>
    </recommendedName>
</protein>
<feature type="chain" id="PRO_0000096230" description="Antifungal protein R">
    <location>
        <begin position="1"/>
        <end position="44" status="greater than"/>
    </location>
</feature>
<feature type="non-terminal residue">
    <location>
        <position position="44"/>
    </location>
</feature>
<name>THHR_HORVU</name>
<accession>P33044</accession>
<reference key="1">
    <citation type="journal article" date="1991" name="FEBS Lett.">
        <title>Two antifungal thaumatin-like proteins from barley grain.</title>
        <authorList>
            <person name="Hejgaard J."/>
            <person name="Jacobsen S."/>
            <person name="Svendsen I."/>
        </authorList>
    </citation>
    <scope>PROTEIN SEQUENCE</scope>
    <source>
        <strain>cv. Bomi Riso 1508</strain>
    </source>
</reference>
<proteinExistence type="evidence at protein level"/>
<sequence length="44" mass="4453">ATITVVNRCSYTVWPGALPGGGVRLDPGQRWALNMPAGTAGAAV</sequence>